<evidence type="ECO:0000255" key="1">
    <source>
        <dbReference type="HAMAP-Rule" id="MF_00203"/>
    </source>
</evidence>
<reference key="1">
    <citation type="submission" date="2007-10" db="EMBL/GenBank/DDBJ databases">
        <title>Complete genome of Alkaliphilus oremlandii OhILAs.</title>
        <authorList>
            <person name="Copeland A."/>
            <person name="Lucas S."/>
            <person name="Lapidus A."/>
            <person name="Barry K."/>
            <person name="Detter J.C."/>
            <person name="Glavina del Rio T."/>
            <person name="Hammon N."/>
            <person name="Israni S."/>
            <person name="Dalin E."/>
            <person name="Tice H."/>
            <person name="Pitluck S."/>
            <person name="Chain P."/>
            <person name="Malfatti S."/>
            <person name="Shin M."/>
            <person name="Vergez L."/>
            <person name="Schmutz J."/>
            <person name="Larimer F."/>
            <person name="Land M."/>
            <person name="Hauser L."/>
            <person name="Kyrpides N."/>
            <person name="Mikhailova N."/>
            <person name="Stolz J.F."/>
            <person name="Dawson A."/>
            <person name="Fisher E."/>
            <person name="Crable B."/>
            <person name="Perera E."/>
            <person name="Lisak J."/>
            <person name="Ranganathan M."/>
            <person name="Basu P."/>
            <person name="Richardson P."/>
        </authorList>
    </citation>
    <scope>NUCLEOTIDE SEQUENCE [LARGE SCALE GENOMIC DNA]</scope>
    <source>
        <strain>OhILAs</strain>
    </source>
</reference>
<feature type="chain" id="PRO_1000077749" description="UvrABC system protein C">
    <location>
        <begin position="1"/>
        <end position="621"/>
    </location>
</feature>
<feature type="domain" description="GIY-YIG" evidence="1">
    <location>
        <begin position="13"/>
        <end position="92"/>
    </location>
</feature>
<feature type="domain" description="UVR" evidence="1">
    <location>
        <begin position="205"/>
        <end position="240"/>
    </location>
</feature>
<keyword id="KW-0963">Cytoplasm</keyword>
<keyword id="KW-0227">DNA damage</keyword>
<keyword id="KW-0228">DNA excision</keyword>
<keyword id="KW-0234">DNA repair</keyword>
<keyword id="KW-0267">Excision nuclease</keyword>
<keyword id="KW-1185">Reference proteome</keyword>
<keyword id="KW-0742">SOS response</keyword>
<name>UVRC_ALKOO</name>
<accession>A8MJ06</accession>
<protein>
    <recommendedName>
        <fullName evidence="1">UvrABC system protein C</fullName>
        <shortName evidence="1">Protein UvrC</shortName>
    </recommendedName>
    <alternativeName>
        <fullName evidence="1">Excinuclease ABC subunit C</fullName>
    </alternativeName>
</protein>
<organism>
    <name type="scientific">Alkaliphilus oremlandii (strain OhILAs)</name>
    <name type="common">Clostridium oremlandii (strain OhILAs)</name>
    <dbReference type="NCBI Taxonomy" id="350688"/>
    <lineage>
        <taxon>Bacteria</taxon>
        <taxon>Bacillati</taxon>
        <taxon>Bacillota</taxon>
        <taxon>Clostridia</taxon>
        <taxon>Peptostreptococcales</taxon>
        <taxon>Natronincolaceae</taxon>
        <taxon>Alkaliphilus</taxon>
    </lineage>
</organism>
<sequence>MFDLKEKLRTLPEKPGVYMMRNDKNEIIYVGKAISLKNRVRQYFQSSKNHPPKVKAMVSHIVTFEYIVTDTELEALILECNLIKENRPKYNVLLRDDKTYPYIKITTNEEYPRILKTRKVIKDKAKYFGPYTNIGALNETLDVIHTIYPIRTCNKNIERMIANKERPCLNYHIKKCIGPCTGLVTKEEYHQMIHDIILFLDGKEDELVRKIEEKMKAAAISMDFENAARYRDQIIALNNIVEKQKIVSVAEQDQDVIAMAKNEGNTWIQVFFIRKGKLVQREHFILKDTEDDSNQEIIASFLKQFYSGATFVPKEILIEESVEDLNVLEEWLSGKRGNKVSIKVPQKGDKKELLDMVKKNALMTMEQATTVIQLEKEKTEDTLIELAQLLDLEEVPYRIESYDISNIQGVESVGSMVVFEGGKSKNKDYRRFKIKTVKGPNDYASLEEIITRRFKRGLEETQDIIEQSLEVSEGKFAIFPDLIMVDGGFGQVTSVKKALHSLNLNIPVCGMIKDDRHRTKGLVYEGEELSIEKTSHLFRLITKIQDEVHRFAITYHRSLRKKTTLQSILEEIPGVGEARRKALMIHFGSIDKIKNATVEELLEVQGMNRKVAENIVEYLNK</sequence>
<dbReference type="EMBL" id="CP000853">
    <property type="protein sequence ID" value="ABW19788.1"/>
    <property type="molecule type" value="Genomic_DNA"/>
</dbReference>
<dbReference type="RefSeq" id="WP_012160095.1">
    <property type="nucleotide sequence ID" value="NC_009922.1"/>
</dbReference>
<dbReference type="SMR" id="A8MJ06"/>
<dbReference type="STRING" id="350688.Clos_2255"/>
<dbReference type="KEGG" id="aoe:Clos_2255"/>
<dbReference type="eggNOG" id="COG0322">
    <property type="taxonomic scope" value="Bacteria"/>
</dbReference>
<dbReference type="HOGENOM" id="CLU_014841_3_2_9"/>
<dbReference type="OrthoDB" id="9804933at2"/>
<dbReference type="Proteomes" id="UP000000269">
    <property type="component" value="Chromosome"/>
</dbReference>
<dbReference type="GO" id="GO:0005737">
    <property type="term" value="C:cytoplasm"/>
    <property type="evidence" value="ECO:0007669"/>
    <property type="project" value="UniProtKB-SubCell"/>
</dbReference>
<dbReference type="GO" id="GO:0009380">
    <property type="term" value="C:excinuclease repair complex"/>
    <property type="evidence" value="ECO:0007669"/>
    <property type="project" value="InterPro"/>
</dbReference>
<dbReference type="GO" id="GO:0003677">
    <property type="term" value="F:DNA binding"/>
    <property type="evidence" value="ECO:0007669"/>
    <property type="project" value="UniProtKB-UniRule"/>
</dbReference>
<dbReference type="GO" id="GO:0009381">
    <property type="term" value="F:excinuclease ABC activity"/>
    <property type="evidence" value="ECO:0007669"/>
    <property type="project" value="UniProtKB-UniRule"/>
</dbReference>
<dbReference type="GO" id="GO:0006289">
    <property type="term" value="P:nucleotide-excision repair"/>
    <property type="evidence" value="ECO:0007669"/>
    <property type="project" value="UniProtKB-UniRule"/>
</dbReference>
<dbReference type="GO" id="GO:0009432">
    <property type="term" value="P:SOS response"/>
    <property type="evidence" value="ECO:0007669"/>
    <property type="project" value="UniProtKB-UniRule"/>
</dbReference>
<dbReference type="CDD" id="cd10434">
    <property type="entry name" value="GIY-YIG_UvrC_Cho"/>
    <property type="match status" value="1"/>
</dbReference>
<dbReference type="FunFam" id="3.40.1440.10:FF:000001">
    <property type="entry name" value="UvrABC system protein C"/>
    <property type="match status" value="1"/>
</dbReference>
<dbReference type="Gene3D" id="1.10.150.20">
    <property type="entry name" value="5' to 3' exonuclease, C-terminal subdomain"/>
    <property type="match status" value="1"/>
</dbReference>
<dbReference type="Gene3D" id="3.40.1440.10">
    <property type="entry name" value="GIY-YIG endonuclease"/>
    <property type="match status" value="1"/>
</dbReference>
<dbReference type="Gene3D" id="4.10.860.10">
    <property type="entry name" value="UVR domain"/>
    <property type="match status" value="1"/>
</dbReference>
<dbReference type="Gene3D" id="3.30.420.340">
    <property type="entry name" value="UvrC, RNAse H endonuclease domain"/>
    <property type="match status" value="1"/>
</dbReference>
<dbReference type="HAMAP" id="MF_00203">
    <property type="entry name" value="UvrC"/>
    <property type="match status" value="1"/>
</dbReference>
<dbReference type="InterPro" id="IPR041663">
    <property type="entry name" value="DisA/LigA_HHH"/>
</dbReference>
<dbReference type="InterPro" id="IPR000305">
    <property type="entry name" value="GIY-YIG_endonuc"/>
</dbReference>
<dbReference type="InterPro" id="IPR035901">
    <property type="entry name" value="GIY-YIG_endonuc_sf"/>
</dbReference>
<dbReference type="InterPro" id="IPR047296">
    <property type="entry name" value="GIY-YIG_UvrC_Cho"/>
</dbReference>
<dbReference type="InterPro" id="IPR003583">
    <property type="entry name" value="Hlx-hairpin-Hlx_DNA-bd_motif"/>
</dbReference>
<dbReference type="InterPro" id="IPR010994">
    <property type="entry name" value="RuvA_2-like"/>
</dbReference>
<dbReference type="InterPro" id="IPR001943">
    <property type="entry name" value="UVR_dom"/>
</dbReference>
<dbReference type="InterPro" id="IPR036876">
    <property type="entry name" value="UVR_dom_sf"/>
</dbReference>
<dbReference type="InterPro" id="IPR050066">
    <property type="entry name" value="UvrABC_protein_C"/>
</dbReference>
<dbReference type="InterPro" id="IPR004791">
    <property type="entry name" value="UvrC"/>
</dbReference>
<dbReference type="InterPro" id="IPR001162">
    <property type="entry name" value="UvrC_RNase_H_dom"/>
</dbReference>
<dbReference type="InterPro" id="IPR038476">
    <property type="entry name" value="UvrC_RNase_H_dom_sf"/>
</dbReference>
<dbReference type="NCBIfam" id="NF001824">
    <property type="entry name" value="PRK00558.1-5"/>
    <property type="match status" value="1"/>
</dbReference>
<dbReference type="NCBIfam" id="TIGR00194">
    <property type="entry name" value="uvrC"/>
    <property type="match status" value="1"/>
</dbReference>
<dbReference type="PANTHER" id="PTHR30562:SF1">
    <property type="entry name" value="UVRABC SYSTEM PROTEIN C"/>
    <property type="match status" value="1"/>
</dbReference>
<dbReference type="PANTHER" id="PTHR30562">
    <property type="entry name" value="UVRC/OXIDOREDUCTASE"/>
    <property type="match status" value="1"/>
</dbReference>
<dbReference type="Pfam" id="PF01541">
    <property type="entry name" value="GIY-YIG"/>
    <property type="match status" value="1"/>
</dbReference>
<dbReference type="Pfam" id="PF12826">
    <property type="entry name" value="HHH_2"/>
    <property type="match status" value="1"/>
</dbReference>
<dbReference type="Pfam" id="PF02151">
    <property type="entry name" value="UVR"/>
    <property type="match status" value="1"/>
</dbReference>
<dbReference type="Pfam" id="PF22920">
    <property type="entry name" value="UvrC_RNaseH"/>
    <property type="match status" value="1"/>
</dbReference>
<dbReference type="Pfam" id="PF08459">
    <property type="entry name" value="UvrC_RNaseH_dom"/>
    <property type="match status" value="1"/>
</dbReference>
<dbReference type="SMART" id="SM00465">
    <property type="entry name" value="GIYc"/>
    <property type="match status" value="1"/>
</dbReference>
<dbReference type="SMART" id="SM00278">
    <property type="entry name" value="HhH1"/>
    <property type="match status" value="2"/>
</dbReference>
<dbReference type="SUPFAM" id="SSF46600">
    <property type="entry name" value="C-terminal UvrC-binding domain of UvrB"/>
    <property type="match status" value="1"/>
</dbReference>
<dbReference type="SUPFAM" id="SSF82771">
    <property type="entry name" value="GIY-YIG endonuclease"/>
    <property type="match status" value="1"/>
</dbReference>
<dbReference type="SUPFAM" id="SSF47781">
    <property type="entry name" value="RuvA domain 2-like"/>
    <property type="match status" value="1"/>
</dbReference>
<dbReference type="PROSITE" id="PS50164">
    <property type="entry name" value="GIY_YIG"/>
    <property type="match status" value="1"/>
</dbReference>
<dbReference type="PROSITE" id="PS50151">
    <property type="entry name" value="UVR"/>
    <property type="match status" value="1"/>
</dbReference>
<dbReference type="PROSITE" id="PS50165">
    <property type="entry name" value="UVRC"/>
    <property type="match status" value="1"/>
</dbReference>
<gene>
    <name evidence="1" type="primary">uvrC</name>
    <name type="ordered locus">Clos_2255</name>
</gene>
<comment type="function">
    <text evidence="1">The UvrABC repair system catalyzes the recognition and processing of DNA lesions. UvrC both incises the 5' and 3' sides of the lesion. The N-terminal half is responsible for the 3' incision and the C-terminal half is responsible for the 5' incision.</text>
</comment>
<comment type="subunit">
    <text evidence="1">Interacts with UvrB in an incision complex.</text>
</comment>
<comment type="subcellular location">
    <subcellularLocation>
        <location evidence="1">Cytoplasm</location>
    </subcellularLocation>
</comment>
<comment type="similarity">
    <text evidence="1">Belongs to the UvrC family.</text>
</comment>
<proteinExistence type="inferred from homology"/>